<proteinExistence type="inferred from homology"/>
<sequence length="342" mass="35365">MKLTILGAGAWGTALASHAATAAADHDVVLWGRDPAQLAGIAATGVNATYLPGVSLSPRLVCEPDFDRAVDHALTDPEGLLIIGTPVSGLREMTRRLAARRKGPLAMLWLCKGFEAETHAMPHQMVHDELNALGVAPGEIEYGVLTGPSFAKEVAQGLPCALTVAGTAHVLIDRAQAAFHHHAMRIYGSDDLIGVEVGGAVKNVLAIATGASDGLGLGLNARAALITRGLAEMTRLGLALGGRVETFMGLAGMGDLILTATGDLSRNRKVGQQLAGGKTLDQILADLGHVAEGVRCAQAVAALAARVGVEMPITRAVCAVLFEGLPVADAVSQLLQRDARDE</sequence>
<gene>
    <name evidence="1" type="primary">gpsA</name>
    <name type="ordered locus">Rmet_0255</name>
</gene>
<name>GPDA_CUPMC</name>
<feature type="chain" id="PRO_0000255351" description="Glycerol-3-phosphate dehydrogenase [NAD(P)+]">
    <location>
        <begin position="1"/>
        <end position="342"/>
    </location>
</feature>
<feature type="active site" description="Proton acceptor" evidence="1">
    <location>
        <position position="202"/>
    </location>
</feature>
<feature type="binding site" evidence="1">
    <location>
        <position position="11"/>
    </location>
    <ligand>
        <name>NADPH</name>
        <dbReference type="ChEBI" id="CHEBI:57783"/>
    </ligand>
</feature>
<feature type="binding site" evidence="1">
    <location>
        <position position="33"/>
    </location>
    <ligand>
        <name>NADPH</name>
        <dbReference type="ChEBI" id="CHEBI:57783"/>
    </ligand>
</feature>
<feature type="binding site" evidence="1">
    <location>
        <position position="112"/>
    </location>
    <ligand>
        <name>NADPH</name>
        <dbReference type="ChEBI" id="CHEBI:57783"/>
    </ligand>
</feature>
<feature type="binding site" evidence="1">
    <location>
        <position position="112"/>
    </location>
    <ligand>
        <name>sn-glycerol 3-phosphate</name>
        <dbReference type="ChEBI" id="CHEBI:57597"/>
    </ligand>
</feature>
<feature type="binding site" evidence="1">
    <location>
        <position position="147"/>
    </location>
    <ligand>
        <name>sn-glycerol 3-phosphate</name>
        <dbReference type="ChEBI" id="CHEBI:57597"/>
    </ligand>
</feature>
<feature type="binding site" evidence="1">
    <location>
        <position position="149"/>
    </location>
    <ligand>
        <name>sn-glycerol 3-phosphate</name>
        <dbReference type="ChEBI" id="CHEBI:57597"/>
    </ligand>
</feature>
<feature type="binding site" evidence="1">
    <location>
        <position position="151"/>
    </location>
    <ligand>
        <name>NADPH</name>
        <dbReference type="ChEBI" id="CHEBI:57783"/>
    </ligand>
</feature>
<feature type="binding site" evidence="1">
    <location>
        <position position="202"/>
    </location>
    <ligand>
        <name>sn-glycerol 3-phosphate</name>
        <dbReference type="ChEBI" id="CHEBI:57597"/>
    </ligand>
</feature>
<feature type="binding site" evidence="1">
    <location>
        <position position="255"/>
    </location>
    <ligand>
        <name>sn-glycerol 3-phosphate</name>
        <dbReference type="ChEBI" id="CHEBI:57597"/>
    </ligand>
</feature>
<feature type="binding site" evidence="1">
    <location>
        <position position="265"/>
    </location>
    <ligand>
        <name>sn-glycerol 3-phosphate</name>
        <dbReference type="ChEBI" id="CHEBI:57597"/>
    </ligand>
</feature>
<feature type="binding site" evidence="1">
    <location>
        <position position="266"/>
    </location>
    <ligand>
        <name>NADPH</name>
        <dbReference type="ChEBI" id="CHEBI:57783"/>
    </ligand>
</feature>
<feature type="binding site" evidence="1">
    <location>
        <position position="266"/>
    </location>
    <ligand>
        <name>sn-glycerol 3-phosphate</name>
        <dbReference type="ChEBI" id="CHEBI:57597"/>
    </ligand>
</feature>
<feature type="binding site" evidence="1">
    <location>
        <position position="267"/>
    </location>
    <ligand>
        <name>sn-glycerol 3-phosphate</name>
        <dbReference type="ChEBI" id="CHEBI:57597"/>
    </ligand>
</feature>
<feature type="binding site" evidence="1">
    <location>
        <position position="290"/>
    </location>
    <ligand>
        <name>NADPH</name>
        <dbReference type="ChEBI" id="CHEBI:57783"/>
    </ligand>
</feature>
<feature type="binding site" evidence="1">
    <location>
        <position position="292"/>
    </location>
    <ligand>
        <name>NADPH</name>
        <dbReference type="ChEBI" id="CHEBI:57783"/>
    </ligand>
</feature>
<keyword id="KW-0963">Cytoplasm</keyword>
<keyword id="KW-0444">Lipid biosynthesis</keyword>
<keyword id="KW-0443">Lipid metabolism</keyword>
<keyword id="KW-0520">NAD</keyword>
<keyword id="KW-0521">NADP</keyword>
<keyword id="KW-0547">Nucleotide-binding</keyword>
<keyword id="KW-0560">Oxidoreductase</keyword>
<keyword id="KW-0594">Phospholipid biosynthesis</keyword>
<keyword id="KW-1208">Phospholipid metabolism</keyword>
<keyword id="KW-1185">Reference proteome</keyword>
<organism>
    <name type="scientific">Cupriavidus metallidurans (strain ATCC 43123 / DSM 2839 / NBRC 102507 / CH34)</name>
    <name type="common">Ralstonia metallidurans</name>
    <dbReference type="NCBI Taxonomy" id="266264"/>
    <lineage>
        <taxon>Bacteria</taxon>
        <taxon>Pseudomonadati</taxon>
        <taxon>Pseudomonadota</taxon>
        <taxon>Betaproteobacteria</taxon>
        <taxon>Burkholderiales</taxon>
        <taxon>Burkholderiaceae</taxon>
        <taxon>Cupriavidus</taxon>
    </lineage>
</organism>
<comment type="function">
    <text evidence="1">Catalyzes the reduction of the glycolytic intermediate dihydroxyacetone phosphate (DHAP) to sn-glycerol 3-phosphate (G3P), the key precursor for phospholipid synthesis.</text>
</comment>
<comment type="catalytic activity">
    <reaction evidence="1">
        <text>sn-glycerol 3-phosphate + NAD(+) = dihydroxyacetone phosphate + NADH + H(+)</text>
        <dbReference type="Rhea" id="RHEA:11092"/>
        <dbReference type="ChEBI" id="CHEBI:15378"/>
        <dbReference type="ChEBI" id="CHEBI:57540"/>
        <dbReference type="ChEBI" id="CHEBI:57597"/>
        <dbReference type="ChEBI" id="CHEBI:57642"/>
        <dbReference type="ChEBI" id="CHEBI:57945"/>
        <dbReference type="EC" id="1.1.1.94"/>
    </reaction>
    <physiologicalReaction direction="right-to-left" evidence="1">
        <dbReference type="Rhea" id="RHEA:11094"/>
    </physiologicalReaction>
</comment>
<comment type="catalytic activity">
    <reaction evidence="1">
        <text>sn-glycerol 3-phosphate + NADP(+) = dihydroxyacetone phosphate + NADPH + H(+)</text>
        <dbReference type="Rhea" id="RHEA:11096"/>
        <dbReference type="ChEBI" id="CHEBI:15378"/>
        <dbReference type="ChEBI" id="CHEBI:57597"/>
        <dbReference type="ChEBI" id="CHEBI:57642"/>
        <dbReference type="ChEBI" id="CHEBI:57783"/>
        <dbReference type="ChEBI" id="CHEBI:58349"/>
        <dbReference type="EC" id="1.1.1.94"/>
    </reaction>
    <physiologicalReaction direction="right-to-left" evidence="1">
        <dbReference type="Rhea" id="RHEA:11098"/>
    </physiologicalReaction>
</comment>
<comment type="pathway">
    <text evidence="1">Membrane lipid metabolism; glycerophospholipid metabolism.</text>
</comment>
<comment type="subcellular location">
    <subcellularLocation>
        <location evidence="1">Cytoplasm</location>
    </subcellularLocation>
</comment>
<comment type="similarity">
    <text evidence="1">Belongs to the NAD-dependent glycerol-3-phosphate dehydrogenase family.</text>
</comment>
<dbReference type="EC" id="1.1.1.94" evidence="1"/>
<dbReference type="EMBL" id="CP000352">
    <property type="protein sequence ID" value="ABF07141.1"/>
    <property type="molecule type" value="Genomic_DNA"/>
</dbReference>
<dbReference type="RefSeq" id="WP_008642656.1">
    <property type="nucleotide sequence ID" value="NC_007973.1"/>
</dbReference>
<dbReference type="SMR" id="Q1LRT5"/>
<dbReference type="STRING" id="266264.Rmet_0255"/>
<dbReference type="KEGG" id="rme:Rmet_0255"/>
<dbReference type="eggNOG" id="COG0240">
    <property type="taxonomic scope" value="Bacteria"/>
</dbReference>
<dbReference type="HOGENOM" id="CLU_033449_0_2_4"/>
<dbReference type="UniPathway" id="UPA00940"/>
<dbReference type="Proteomes" id="UP000002429">
    <property type="component" value="Chromosome"/>
</dbReference>
<dbReference type="GO" id="GO:0005829">
    <property type="term" value="C:cytosol"/>
    <property type="evidence" value="ECO:0007669"/>
    <property type="project" value="TreeGrafter"/>
</dbReference>
<dbReference type="GO" id="GO:0047952">
    <property type="term" value="F:glycerol-3-phosphate dehydrogenase [NAD(P)+] activity"/>
    <property type="evidence" value="ECO:0007669"/>
    <property type="project" value="UniProtKB-UniRule"/>
</dbReference>
<dbReference type="GO" id="GO:0051287">
    <property type="term" value="F:NAD binding"/>
    <property type="evidence" value="ECO:0007669"/>
    <property type="project" value="InterPro"/>
</dbReference>
<dbReference type="GO" id="GO:0005975">
    <property type="term" value="P:carbohydrate metabolic process"/>
    <property type="evidence" value="ECO:0007669"/>
    <property type="project" value="InterPro"/>
</dbReference>
<dbReference type="GO" id="GO:0046167">
    <property type="term" value="P:glycerol-3-phosphate biosynthetic process"/>
    <property type="evidence" value="ECO:0007669"/>
    <property type="project" value="UniProtKB-UniRule"/>
</dbReference>
<dbReference type="GO" id="GO:0046168">
    <property type="term" value="P:glycerol-3-phosphate catabolic process"/>
    <property type="evidence" value="ECO:0007669"/>
    <property type="project" value="InterPro"/>
</dbReference>
<dbReference type="GO" id="GO:0006650">
    <property type="term" value="P:glycerophospholipid metabolic process"/>
    <property type="evidence" value="ECO:0007669"/>
    <property type="project" value="UniProtKB-UniRule"/>
</dbReference>
<dbReference type="GO" id="GO:0008654">
    <property type="term" value="P:phospholipid biosynthetic process"/>
    <property type="evidence" value="ECO:0007669"/>
    <property type="project" value="UniProtKB-KW"/>
</dbReference>
<dbReference type="FunFam" id="1.10.1040.10:FF:000001">
    <property type="entry name" value="Glycerol-3-phosphate dehydrogenase [NAD(P)+]"/>
    <property type="match status" value="1"/>
</dbReference>
<dbReference type="Gene3D" id="1.10.1040.10">
    <property type="entry name" value="N-(1-d-carboxylethyl)-l-norvaline Dehydrogenase, domain 2"/>
    <property type="match status" value="1"/>
</dbReference>
<dbReference type="Gene3D" id="3.40.50.720">
    <property type="entry name" value="NAD(P)-binding Rossmann-like Domain"/>
    <property type="match status" value="1"/>
</dbReference>
<dbReference type="HAMAP" id="MF_00394">
    <property type="entry name" value="NAD_Glyc3P_dehydrog"/>
    <property type="match status" value="1"/>
</dbReference>
<dbReference type="InterPro" id="IPR008927">
    <property type="entry name" value="6-PGluconate_DH-like_C_sf"/>
</dbReference>
<dbReference type="InterPro" id="IPR013328">
    <property type="entry name" value="6PGD_dom2"/>
</dbReference>
<dbReference type="InterPro" id="IPR006168">
    <property type="entry name" value="G3P_DH_NAD-dep"/>
</dbReference>
<dbReference type="InterPro" id="IPR006109">
    <property type="entry name" value="G3P_DH_NAD-dep_C"/>
</dbReference>
<dbReference type="InterPro" id="IPR011128">
    <property type="entry name" value="G3P_DH_NAD-dep_N"/>
</dbReference>
<dbReference type="InterPro" id="IPR036291">
    <property type="entry name" value="NAD(P)-bd_dom_sf"/>
</dbReference>
<dbReference type="NCBIfam" id="NF000940">
    <property type="entry name" value="PRK00094.1-2"/>
    <property type="match status" value="1"/>
</dbReference>
<dbReference type="NCBIfam" id="NF000942">
    <property type="entry name" value="PRK00094.1-4"/>
    <property type="match status" value="1"/>
</dbReference>
<dbReference type="PANTHER" id="PTHR11728">
    <property type="entry name" value="GLYCEROL-3-PHOSPHATE DEHYDROGENASE"/>
    <property type="match status" value="1"/>
</dbReference>
<dbReference type="PANTHER" id="PTHR11728:SF1">
    <property type="entry name" value="GLYCEROL-3-PHOSPHATE DEHYDROGENASE [NAD(+)] 2, CHLOROPLASTIC"/>
    <property type="match status" value="1"/>
</dbReference>
<dbReference type="Pfam" id="PF07479">
    <property type="entry name" value="NAD_Gly3P_dh_C"/>
    <property type="match status" value="1"/>
</dbReference>
<dbReference type="Pfam" id="PF01210">
    <property type="entry name" value="NAD_Gly3P_dh_N"/>
    <property type="match status" value="1"/>
</dbReference>
<dbReference type="PIRSF" id="PIRSF000114">
    <property type="entry name" value="Glycerol-3-P_dh"/>
    <property type="match status" value="1"/>
</dbReference>
<dbReference type="PRINTS" id="PR00077">
    <property type="entry name" value="GPDHDRGNASE"/>
</dbReference>
<dbReference type="SUPFAM" id="SSF48179">
    <property type="entry name" value="6-phosphogluconate dehydrogenase C-terminal domain-like"/>
    <property type="match status" value="1"/>
</dbReference>
<dbReference type="SUPFAM" id="SSF51735">
    <property type="entry name" value="NAD(P)-binding Rossmann-fold domains"/>
    <property type="match status" value="1"/>
</dbReference>
<dbReference type="PROSITE" id="PS00957">
    <property type="entry name" value="NAD_G3PDH"/>
    <property type="match status" value="1"/>
</dbReference>
<protein>
    <recommendedName>
        <fullName evidence="1">Glycerol-3-phosphate dehydrogenase [NAD(P)+]</fullName>
        <ecNumber evidence="1">1.1.1.94</ecNumber>
    </recommendedName>
    <alternativeName>
        <fullName evidence="1">NAD(P)(+)-dependent glycerol-3-phosphate dehydrogenase</fullName>
    </alternativeName>
    <alternativeName>
        <fullName evidence="1">NAD(P)H-dependent dihydroxyacetone-phosphate reductase</fullName>
    </alternativeName>
</protein>
<accession>Q1LRT5</accession>
<evidence type="ECO:0000255" key="1">
    <source>
        <dbReference type="HAMAP-Rule" id="MF_00394"/>
    </source>
</evidence>
<reference key="1">
    <citation type="journal article" date="2010" name="PLoS ONE">
        <title>The complete genome sequence of Cupriavidus metallidurans strain CH34, a master survivalist in harsh and anthropogenic environments.</title>
        <authorList>
            <person name="Janssen P.J."/>
            <person name="Van Houdt R."/>
            <person name="Moors H."/>
            <person name="Monsieurs P."/>
            <person name="Morin N."/>
            <person name="Michaux A."/>
            <person name="Benotmane M.A."/>
            <person name="Leys N."/>
            <person name="Vallaeys T."/>
            <person name="Lapidus A."/>
            <person name="Monchy S."/>
            <person name="Medigue C."/>
            <person name="Taghavi S."/>
            <person name="McCorkle S."/>
            <person name="Dunn J."/>
            <person name="van der Lelie D."/>
            <person name="Mergeay M."/>
        </authorList>
    </citation>
    <scope>NUCLEOTIDE SEQUENCE [LARGE SCALE GENOMIC DNA]</scope>
    <source>
        <strain>ATCC 43123 / DSM 2839 / NBRC 102507 / CH34</strain>
    </source>
</reference>